<sequence>MSTREGSLWGGRFADGPSDALAALSKSTHFDWVLAPYDIVASRAHTVILYRAGLLSEEQRDGLLAGLDSLAEDVADGSFTPLVTDEDVHAALERGLIDRVGPDLGGRLRAGRSRNDQVATLFRMWLRDAVRRVAAGALDVVGALVAQAAAHPEAIMPGKTHLQSAQPVLLAHHLLAHAHPLLRDVDRIVDFDKRAAVSPYGSGALAGSSLGLDPDAIAAELGFASAADNSIDATASRDFAAEAAFVFAMIGVDLSRLAEDVILWSSTEFGYVKLHDAWSTGSSIMPQKKNPDIAELARGKSGRLIGNLAGLLATLKAQPLAYNRDLQEDKEPVFDAVAQLELVLPAMAGLVGSLTFDVQRMAALAPAGYTLATDIAEWLVRQGVPFRSAHEAAGAAVRAAEQRAVGLDELTDDELAAISPALTPQVREVLTIEGSVSSRDARGGTAPARVVEQIDTVAATAARLRERLGGPA</sequence>
<dbReference type="EC" id="4.3.2.1" evidence="1"/>
<dbReference type="EMBL" id="CP000479">
    <property type="protein sequence ID" value="ABK64487.1"/>
    <property type="molecule type" value="Genomic_DNA"/>
</dbReference>
<dbReference type="RefSeq" id="WP_011725264.1">
    <property type="nucleotide sequence ID" value="NC_008595.1"/>
</dbReference>
<dbReference type="SMR" id="A0QHA7"/>
<dbReference type="KEGG" id="mav:MAV_3111"/>
<dbReference type="HOGENOM" id="CLU_027272_2_2_11"/>
<dbReference type="UniPathway" id="UPA00068">
    <property type="reaction ID" value="UER00114"/>
</dbReference>
<dbReference type="Proteomes" id="UP000001574">
    <property type="component" value="Chromosome"/>
</dbReference>
<dbReference type="GO" id="GO:0005829">
    <property type="term" value="C:cytosol"/>
    <property type="evidence" value="ECO:0007669"/>
    <property type="project" value="TreeGrafter"/>
</dbReference>
<dbReference type="GO" id="GO:0004056">
    <property type="term" value="F:argininosuccinate lyase activity"/>
    <property type="evidence" value="ECO:0007669"/>
    <property type="project" value="UniProtKB-UniRule"/>
</dbReference>
<dbReference type="GO" id="GO:0042450">
    <property type="term" value="P:arginine biosynthetic process via ornithine"/>
    <property type="evidence" value="ECO:0007669"/>
    <property type="project" value="InterPro"/>
</dbReference>
<dbReference type="GO" id="GO:0006526">
    <property type="term" value="P:L-arginine biosynthetic process"/>
    <property type="evidence" value="ECO:0007669"/>
    <property type="project" value="UniProtKB-UniRule"/>
</dbReference>
<dbReference type="CDD" id="cd01359">
    <property type="entry name" value="Argininosuccinate_lyase"/>
    <property type="match status" value="1"/>
</dbReference>
<dbReference type="FunFam" id="1.10.40.30:FF:000001">
    <property type="entry name" value="Argininosuccinate lyase"/>
    <property type="match status" value="1"/>
</dbReference>
<dbReference type="FunFam" id="1.20.200.10:FF:000015">
    <property type="entry name" value="argininosuccinate lyase isoform X2"/>
    <property type="match status" value="1"/>
</dbReference>
<dbReference type="Gene3D" id="1.10.40.30">
    <property type="entry name" value="Fumarase/aspartase (C-terminal domain)"/>
    <property type="match status" value="1"/>
</dbReference>
<dbReference type="Gene3D" id="1.20.200.10">
    <property type="entry name" value="Fumarase/aspartase (Central domain)"/>
    <property type="match status" value="1"/>
</dbReference>
<dbReference type="Gene3D" id="1.10.275.10">
    <property type="entry name" value="Fumarase/aspartase (N-terminal domain)"/>
    <property type="match status" value="1"/>
</dbReference>
<dbReference type="HAMAP" id="MF_00006">
    <property type="entry name" value="Arg_succ_lyase"/>
    <property type="match status" value="1"/>
</dbReference>
<dbReference type="InterPro" id="IPR029419">
    <property type="entry name" value="Arg_succ_lyase_C"/>
</dbReference>
<dbReference type="InterPro" id="IPR009049">
    <property type="entry name" value="Argininosuccinate_lyase"/>
</dbReference>
<dbReference type="InterPro" id="IPR024083">
    <property type="entry name" value="Fumarase/histidase_N"/>
</dbReference>
<dbReference type="InterPro" id="IPR020557">
    <property type="entry name" value="Fumarate_lyase_CS"/>
</dbReference>
<dbReference type="InterPro" id="IPR000362">
    <property type="entry name" value="Fumarate_lyase_fam"/>
</dbReference>
<dbReference type="InterPro" id="IPR022761">
    <property type="entry name" value="Fumarate_lyase_N"/>
</dbReference>
<dbReference type="InterPro" id="IPR008948">
    <property type="entry name" value="L-Aspartase-like"/>
</dbReference>
<dbReference type="NCBIfam" id="TIGR00838">
    <property type="entry name" value="argH"/>
    <property type="match status" value="1"/>
</dbReference>
<dbReference type="PANTHER" id="PTHR43814">
    <property type="entry name" value="ARGININOSUCCINATE LYASE"/>
    <property type="match status" value="1"/>
</dbReference>
<dbReference type="PANTHER" id="PTHR43814:SF1">
    <property type="entry name" value="ARGININOSUCCINATE LYASE"/>
    <property type="match status" value="1"/>
</dbReference>
<dbReference type="Pfam" id="PF14698">
    <property type="entry name" value="ASL_C2"/>
    <property type="match status" value="1"/>
</dbReference>
<dbReference type="Pfam" id="PF00206">
    <property type="entry name" value="Lyase_1"/>
    <property type="match status" value="1"/>
</dbReference>
<dbReference type="PRINTS" id="PR00145">
    <property type="entry name" value="ARGSUCLYASE"/>
</dbReference>
<dbReference type="PRINTS" id="PR00149">
    <property type="entry name" value="FUMRATELYASE"/>
</dbReference>
<dbReference type="SUPFAM" id="SSF48557">
    <property type="entry name" value="L-aspartase-like"/>
    <property type="match status" value="1"/>
</dbReference>
<dbReference type="PROSITE" id="PS00163">
    <property type="entry name" value="FUMARATE_LYASES"/>
    <property type="match status" value="1"/>
</dbReference>
<protein>
    <recommendedName>
        <fullName evidence="1">Argininosuccinate lyase</fullName>
        <shortName evidence="1">ASAL</shortName>
        <ecNumber evidence="1">4.3.2.1</ecNumber>
    </recommendedName>
    <alternativeName>
        <fullName evidence="1">Arginosuccinase</fullName>
    </alternativeName>
</protein>
<name>ARLY_MYCA1</name>
<gene>
    <name evidence="1" type="primary">argH</name>
    <name type="ordered locus">MAV_3111</name>
</gene>
<keyword id="KW-0028">Amino-acid biosynthesis</keyword>
<keyword id="KW-0055">Arginine biosynthesis</keyword>
<keyword id="KW-0963">Cytoplasm</keyword>
<keyword id="KW-0456">Lyase</keyword>
<reference key="1">
    <citation type="submission" date="2006-10" db="EMBL/GenBank/DDBJ databases">
        <authorList>
            <person name="Fleischmann R.D."/>
            <person name="Dodson R.J."/>
            <person name="Haft D.H."/>
            <person name="Merkel J.S."/>
            <person name="Nelson W.C."/>
            <person name="Fraser C.M."/>
        </authorList>
    </citation>
    <scope>NUCLEOTIDE SEQUENCE [LARGE SCALE GENOMIC DNA]</scope>
    <source>
        <strain>104</strain>
    </source>
</reference>
<organism>
    <name type="scientific">Mycobacterium avium (strain 104)</name>
    <dbReference type="NCBI Taxonomy" id="243243"/>
    <lineage>
        <taxon>Bacteria</taxon>
        <taxon>Bacillati</taxon>
        <taxon>Actinomycetota</taxon>
        <taxon>Actinomycetes</taxon>
        <taxon>Mycobacteriales</taxon>
        <taxon>Mycobacteriaceae</taxon>
        <taxon>Mycobacterium</taxon>
        <taxon>Mycobacterium avium complex (MAC)</taxon>
    </lineage>
</organism>
<accession>A0QHA7</accession>
<feature type="chain" id="PRO_1000000504" description="Argininosuccinate lyase">
    <location>
        <begin position="1"/>
        <end position="472"/>
    </location>
</feature>
<evidence type="ECO:0000255" key="1">
    <source>
        <dbReference type="HAMAP-Rule" id="MF_00006"/>
    </source>
</evidence>
<comment type="catalytic activity">
    <reaction evidence="1">
        <text>2-(N(omega)-L-arginino)succinate = fumarate + L-arginine</text>
        <dbReference type="Rhea" id="RHEA:24020"/>
        <dbReference type="ChEBI" id="CHEBI:29806"/>
        <dbReference type="ChEBI" id="CHEBI:32682"/>
        <dbReference type="ChEBI" id="CHEBI:57472"/>
        <dbReference type="EC" id="4.3.2.1"/>
    </reaction>
</comment>
<comment type="pathway">
    <text evidence="1">Amino-acid biosynthesis; L-arginine biosynthesis; L-arginine from L-ornithine and carbamoyl phosphate: step 3/3.</text>
</comment>
<comment type="subcellular location">
    <subcellularLocation>
        <location evidence="1">Cytoplasm</location>
    </subcellularLocation>
</comment>
<comment type="similarity">
    <text evidence="1">Belongs to the lyase 1 family. Argininosuccinate lyase subfamily.</text>
</comment>
<proteinExistence type="inferred from homology"/>